<reference key="1">
    <citation type="journal article" date="2008" name="PLoS ONE">
        <title>Comparative analysis of Acinetobacters: three genomes for three lifestyles.</title>
        <authorList>
            <person name="Vallenet D."/>
            <person name="Nordmann P."/>
            <person name="Barbe V."/>
            <person name="Poirel L."/>
            <person name="Mangenot S."/>
            <person name="Bataille E."/>
            <person name="Dossat C."/>
            <person name="Gas S."/>
            <person name="Kreimeyer A."/>
            <person name="Lenoble P."/>
            <person name="Oztas S."/>
            <person name="Poulain J."/>
            <person name="Segurens B."/>
            <person name="Robert C."/>
            <person name="Abergel C."/>
            <person name="Claverie J.-M."/>
            <person name="Raoult D."/>
            <person name="Medigue C."/>
            <person name="Weissenbach J."/>
            <person name="Cruveiller S."/>
        </authorList>
    </citation>
    <scope>NUCLEOTIDE SEQUENCE [LARGE SCALE GENOMIC DNA]</scope>
    <source>
        <strain>AYE</strain>
    </source>
</reference>
<comment type="catalytic activity">
    <reaction evidence="1">
        <text>(2R)-3-phosphoglycerate + ATP = (2R)-3-phospho-glyceroyl phosphate + ADP</text>
        <dbReference type="Rhea" id="RHEA:14801"/>
        <dbReference type="ChEBI" id="CHEBI:30616"/>
        <dbReference type="ChEBI" id="CHEBI:57604"/>
        <dbReference type="ChEBI" id="CHEBI:58272"/>
        <dbReference type="ChEBI" id="CHEBI:456216"/>
        <dbReference type="EC" id="2.7.2.3"/>
    </reaction>
</comment>
<comment type="pathway">
    <text evidence="1">Carbohydrate degradation; glycolysis; pyruvate from D-glyceraldehyde 3-phosphate: step 2/5.</text>
</comment>
<comment type="subunit">
    <text evidence="1">Monomer.</text>
</comment>
<comment type="subcellular location">
    <subcellularLocation>
        <location evidence="1">Cytoplasm</location>
    </subcellularLocation>
</comment>
<comment type="similarity">
    <text evidence="1">Belongs to the phosphoglycerate kinase family.</text>
</comment>
<keyword id="KW-0067">ATP-binding</keyword>
<keyword id="KW-0963">Cytoplasm</keyword>
<keyword id="KW-0324">Glycolysis</keyword>
<keyword id="KW-0418">Kinase</keyword>
<keyword id="KW-0547">Nucleotide-binding</keyword>
<keyword id="KW-0808">Transferase</keyword>
<gene>
    <name evidence="1" type="primary">pgk</name>
    <name type="ordered locus">ABAYE2090</name>
</gene>
<organism>
    <name type="scientific">Acinetobacter baumannii (strain AYE)</name>
    <dbReference type="NCBI Taxonomy" id="509173"/>
    <lineage>
        <taxon>Bacteria</taxon>
        <taxon>Pseudomonadati</taxon>
        <taxon>Pseudomonadota</taxon>
        <taxon>Gammaproteobacteria</taxon>
        <taxon>Moraxellales</taxon>
        <taxon>Moraxellaceae</taxon>
        <taxon>Acinetobacter</taxon>
        <taxon>Acinetobacter calcoaceticus/baumannii complex</taxon>
    </lineage>
</organism>
<evidence type="ECO:0000255" key="1">
    <source>
        <dbReference type="HAMAP-Rule" id="MF_00145"/>
    </source>
</evidence>
<protein>
    <recommendedName>
        <fullName evidence="1">Phosphoglycerate kinase</fullName>
        <ecNumber evidence="1">2.7.2.3</ecNumber>
    </recommendedName>
</protein>
<dbReference type="EC" id="2.7.2.3" evidence="1"/>
<dbReference type="EMBL" id="CU459141">
    <property type="protein sequence ID" value="CAM86965.1"/>
    <property type="molecule type" value="Genomic_DNA"/>
</dbReference>
<dbReference type="RefSeq" id="WP_001011093.1">
    <property type="nucleotide sequence ID" value="NZ_JBDGFB010000001.1"/>
</dbReference>
<dbReference type="SMR" id="B0VD03"/>
<dbReference type="EnsemblBacteria" id="CAM86965">
    <property type="protein sequence ID" value="CAM86965"/>
    <property type="gene ID" value="ABAYE2090"/>
</dbReference>
<dbReference type="KEGG" id="aby:ABAYE2090"/>
<dbReference type="HOGENOM" id="CLU_025427_0_2_6"/>
<dbReference type="UniPathway" id="UPA00109">
    <property type="reaction ID" value="UER00185"/>
</dbReference>
<dbReference type="GO" id="GO:0005829">
    <property type="term" value="C:cytosol"/>
    <property type="evidence" value="ECO:0007669"/>
    <property type="project" value="TreeGrafter"/>
</dbReference>
<dbReference type="GO" id="GO:0043531">
    <property type="term" value="F:ADP binding"/>
    <property type="evidence" value="ECO:0007669"/>
    <property type="project" value="TreeGrafter"/>
</dbReference>
<dbReference type="GO" id="GO:0005524">
    <property type="term" value="F:ATP binding"/>
    <property type="evidence" value="ECO:0007669"/>
    <property type="project" value="UniProtKB-KW"/>
</dbReference>
<dbReference type="GO" id="GO:0004618">
    <property type="term" value="F:phosphoglycerate kinase activity"/>
    <property type="evidence" value="ECO:0007669"/>
    <property type="project" value="UniProtKB-UniRule"/>
</dbReference>
<dbReference type="GO" id="GO:0006094">
    <property type="term" value="P:gluconeogenesis"/>
    <property type="evidence" value="ECO:0007669"/>
    <property type="project" value="TreeGrafter"/>
</dbReference>
<dbReference type="GO" id="GO:0006096">
    <property type="term" value="P:glycolytic process"/>
    <property type="evidence" value="ECO:0007669"/>
    <property type="project" value="UniProtKB-UniRule"/>
</dbReference>
<dbReference type="FunFam" id="3.40.50.1260:FF:000001">
    <property type="entry name" value="Phosphoglycerate kinase"/>
    <property type="match status" value="1"/>
</dbReference>
<dbReference type="FunFam" id="3.40.50.1260:FF:000002">
    <property type="entry name" value="Phosphoglycerate kinase"/>
    <property type="match status" value="1"/>
</dbReference>
<dbReference type="Gene3D" id="3.40.50.1260">
    <property type="entry name" value="Phosphoglycerate kinase, N-terminal domain"/>
    <property type="match status" value="2"/>
</dbReference>
<dbReference type="HAMAP" id="MF_00145">
    <property type="entry name" value="Phosphoglyc_kinase"/>
    <property type="match status" value="1"/>
</dbReference>
<dbReference type="InterPro" id="IPR001576">
    <property type="entry name" value="Phosphoglycerate_kinase"/>
</dbReference>
<dbReference type="InterPro" id="IPR015911">
    <property type="entry name" value="Phosphoglycerate_kinase_CS"/>
</dbReference>
<dbReference type="InterPro" id="IPR015824">
    <property type="entry name" value="Phosphoglycerate_kinase_N"/>
</dbReference>
<dbReference type="InterPro" id="IPR036043">
    <property type="entry name" value="Phosphoglycerate_kinase_sf"/>
</dbReference>
<dbReference type="PANTHER" id="PTHR11406">
    <property type="entry name" value="PHOSPHOGLYCERATE KINASE"/>
    <property type="match status" value="1"/>
</dbReference>
<dbReference type="PANTHER" id="PTHR11406:SF23">
    <property type="entry name" value="PHOSPHOGLYCERATE KINASE 1, CHLOROPLASTIC-RELATED"/>
    <property type="match status" value="1"/>
</dbReference>
<dbReference type="Pfam" id="PF00162">
    <property type="entry name" value="PGK"/>
    <property type="match status" value="1"/>
</dbReference>
<dbReference type="PIRSF" id="PIRSF000724">
    <property type="entry name" value="Pgk"/>
    <property type="match status" value="1"/>
</dbReference>
<dbReference type="PRINTS" id="PR00477">
    <property type="entry name" value="PHGLYCKINASE"/>
</dbReference>
<dbReference type="SUPFAM" id="SSF53748">
    <property type="entry name" value="Phosphoglycerate kinase"/>
    <property type="match status" value="1"/>
</dbReference>
<dbReference type="PROSITE" id="PS00111">
    <property type="entry name" value="PGLYCERATE_KINASE"/>
    <property type="match status" value="1"/>
</dbReference>
<proteinExistence type="inferred from homology"/>
<accession>B0VD03</accession>
<feature type="chain" id="PRO_1000096314" description="Phosphoglycerate kinase">
    <location>
        <begin position="1"/>
        <end position="395"/>
    </location>
</feature>
<feature type="binding site" evidence="1">
    <location>
        <begin position="21"/>
        <end position="23"/>
    </location>
    <ligand>
        <name>substrate</name>
    </ligand>
</feature>
<feature type="binding site" evidence="1">
    <location>
        <position position="36"/>
    </location>
    <ligand>
        <name>substrate</name>
    </ligand>
</feature>
<feature type="binding site" evidence="1">
    <location>
        <begin position="59"/>
        <end position="62"/>
    </location>
    <ligand>
        <name>substrate</name>
    </ligand>
</feature>
<feature type="binding site" evidence="1">
    <location>
        <position position="113"/>
    </location>
    <ligand>
        <name>substrate</name>
    </ligand>
</feature>
<feature type="binding site" evidence="1">
    <location>
        <position position="146"/>
    </location>
    <ligand>
        <name>substrate</name>
    </ligand>
</feature>
<feature type="binding site" evidence="1">
    <location>
        <position position="197"/>
    </location>
    <ligand>
        <name>ATP</name>
        <dbReference type="ChEBI" id="CHEBI:30616"/>
    </ligand>
</feature>
<feature type="binding site" evidence="1">
    <location>
        <position position="324"/>
    </location>
    <ligand>
        <name>ATP</name>
        <dbReference type="ChEBI" id="CHEBI:30616"/>
    </ligand>
</feature>
<feature type="binding site" evidence="1">
    <location>
        <begin position="350"/>
        <end position="353"/>
    </location>
    <ligand>
        <name>ATP</name>
        <dbReference type="ChEBI" id="CHEBI:30616"/>
    </ligand>
</feature>
<name>PGK_ACIBY</name>
<sequence length="395" mass="41275">MNFQRMTDLNLAGKRVLIREDLNVPVKNGVITSDARLRAALPTIKAALEKGAAVMVFSHLGRPVEGEPKPEQSLAPVAAYLTEALGQEVKLFTDYLDGVEVEAGQVVLLENVRFNPGEKKNNPELAQKYAALCDVFVMDAFGTAHRAEASTEGVARFAPVAAAGPLLAAELDALGRAMQTPEKPMVAIVAGSKVSTKLDVLNSLSGICDQLIVGGGIANTFLAAAGYNVGKSLYEADLVETAKQIAAKVSVPLPTDVVVADASQINFEDFLGSLAAAQAVIKKVEDVTANDMILDVGPETAKAFANILTTSKTILWNGPVGVFEVDQFGEGTKALSLAVAQSDAFSIAGGGDTLAAIDKYNVADQIGYISTGGGAFLEFVEGKTLPAVAVLLERA</sequence>